<keyword id="KW-0025">Alternative splicing</keyword>
<keyword id="KW-0963">Cytoplasm</keyword>
<keyword id="KW-0216">Detoxification</keyword>
<keyword id="KW-1185">Reference proteome</keyword>
<keyword id="KW-0346">Stress response</keyword>
<keyword id="KW-0808">Transferase</keyword>
<name>GSTL1_ARATH</name>
<feature type="chain" id="PRO_0000413577" description="Glutathione S-transferase L1">
    <location>
        <begin position="1"/>
        <end position="237"/>
    </location>
</feature>
<feature type="domain" description="GST N-terminal">
    <location>
        <begin position="29"/>
        <end position="110"/>
    </location>
</feature>
<feature type="domain" description="GST C-terminal">
    <location>
        <begin position="112"/>
        <end position="232"/>
    </location>
</feature>
<feature type="binding site" evidence="1">
    <location>
        <begin position="39"/>
        <end position="40"/>
    </location>
    <ligand>
        <name>glutathione</name>
        <dbReference type="ChEBI" id="CHEBI:57925"/>
    </ligand>
</feature>
<feature type="binding site" evidence="1">
    <location>
        <begin position="67"/>
        <end position="68"/>
    </location>
    <ligand>
        <name>glutathione</name>
        <dbReference type="ChEBI" id="CHEBI:57925"/>
    </ligand>
</feature>
<feature type="binding site" evidence="1">
    <location>
        <begin position="81"/>
        <end position="82"/>
    </location>
    <ligand>
        <name>glutathione</name>
        <dbReference type="ChEBI" id="CHEBI:57925"/>
    </ligand>
</feature>
<feature type="binding site" evidence="1">
    <location>
        <begin position="94"/>
        <end position="95"/>
    </location>
    <ligand>
        <name>glutathione</name>
        <dbReference type="ChEBI" id="CHEBI:57925"/>
    </ligand>
</feature>
<feature type="splice variant" id="VSP_041941" description="In isoform 2." evidence="4">
    <location>
        <begin position="150"/>
        <end position="151"/>
    </location>
</feature>
<reference key="1">
    <citation type="journal article" date="2000" name="Nature">
        <title>Sequence and analysis of chromosome 5 of the plant Arabidopsis thaliana.</title>
        <authorList>
            <person name="Tabata S."/>
            <person name="Kaneko T."/>
            <person name="Nakamura Y."/>
            <person name="Kotani H."/>
            <person name="Kato T."/>
            <person name="Asamizu E."/>
            <person name="Miyajima N."/>
            <person name="Sasamoto S."/>
            <person name="Kimura T."/>
            <person name="Hosouchi T."/>
            <person name="Kawashima K."/>
            <person name="Kohara M."/>
            <person name="Matsumoto M."/>
            <person name="Matsuno A."/>
            <person name="Muraki A."/>
            <person name="Nakayama S."/>
            <person name="Nakazaki N."/>
            <person name="Naruo K."/>
            <person name="Okumura S."/>
            <person name="Shinpo S."/>
            <person name="Takeuchi C."/>
            <person name="Wada T."/>
            <person name="Watanabe A."/>
            <person name="Yamada M."/>
            <person name="Yasuda M."/>
            <person name="Sato S."/>
            <person name="de la Bastide M."/>
            <person name="Huang E."/>
            <person name="Spiegel L."/>
            <person name="Gnoj L."/>
            <person name="O'Shaughnessy A."/>
            <person name="Preston R."/>
            <person name="Habermann K."/>
            <person name="Murray J."/>
            <person name="Johnson D."/>
            <person name="Rohlfing T."/>
            <person name="Nelson J."/>
            <person name="Stoneking T."/>
            <person name="Pepin K."/>
            <person name="Spieth J."/>
            <person name="Sekhon M."/>
            <person name="Armstrong J."/>
            <person name="Becker M."/>
            <person name="Belter E."/>
            <person name="Cordum H."/>
            <person name="Cordes M."/>
            <person name="Courtney L."/>
            <person name="Courtney W."/>
            <person name="Dante M."/>
            <person name="Du H."/>
            <person name="Edwards J."/>
            <person name="Fryman J."/>
            <person name="Haakensen B."/>
            <person name="Lamar E."/>
            <person name="Latreille P."/>
            <person name="Leonard S."/>
            <person name="Meyer R."/>
            <person name="Mulvaney E."/>
            <person name="Ozersky P."/>
            <person name="Riley A."/>
            <person name="Strowmatt C."/>
            <person name="Wagner-McPherson C."/>
            <person name="Wollam A."/>
            <person name="Yoakum M."/>
            <person name="Bell M."/>
            <person name="Dedhia N."/>
            <person name="Parnell L."/>
            <person name="Shah R."/>
            <person name="Rodriguez M."/>
            <person name="Hoon See L."/>
            <person name="Vil D."/>
            <person name="Baker J."/>
            <person name="Kirchoff K."/>
            <person name="Toth K."/>
            <person name="King L."/>
            <person name="Bahret A."/>
            <person name="Miller B."/>
            <person name="Marra M.A."/>
            <person name="Martienssen R."/>
            <person name="McCombie W.R."/>
            <person name="Wilson R.K."/>
            <person name="Murphy G."/>
            <person name="Bancroft I."/>
            <person name="Volckaert G."/>
            <person name="Wambutt R."/>
            <person name="Duesterhoeft A."/>
            <person name="Stiekema W."/>
            <person name="Pohl T."/>
            <person name="Entian K.-D."/>
            <person name="Terryn N."/>
            <person name="Hartley N."/>
            <person name="Bent E."/>
            <person name="Johnson S."/>
            <person name="Langham S.-A."/>
            <person name="McCullagh B."/>
            <person name="Robben J."/>
            <person name="Grymonprez B."/>
            <person name="Zimmermann W."/>
            <person name="Ramsperger U."/>
            <person name="Wedler H."/>
            <person name="Balke K."/>
            <person name="Wedler E."/>
            <person name="Peters S."/>
            <person name="van Staveren M."/>
            <person name="Dirkse W."/>
            <person name="Mooijman P."/>
            <person name="Klein Lankhorst R."/>
            <person name="Weitzenegger T."/>
            <person name="Bothe G."/>
            <person name="Rose M."/>
            <person name="Hauf J."/>
            <person name="Berneiser S."/>
            <person name="Hempel S."/>
            <person name="Feldpausch M."/>
            <person name="Lamberth S."/>
            <person name="Villarroel R."/>
            <person name="Gielen J."/>
            <person name="Ardiles W."/>
            <person name="Bents O."/>
            <person name="Lemcke K."/>
            <person name="Kolesov G."/>
            <person name="Mayer K.F.X."/>
            <person name="Rudd S."/>
            <person name="Schoof H."/>
            <person name="Schueller C."/>
            <person name="Zaccaria P."/>
            <person name="Mewes H.-W."/>
            <person name="Bevan M."/>
            <person name="Fransz P.F."/>
        </authorList>
    </citation>
    <scope>NUCLEOTIDE SEQUENCE [LARGE SCALE GENOMIC DNA]</scope>
    <source>
        <strain>cv. Columbia</strain>
    </source>
</reference>
<reference key="2">
    <citation type="journal article" date="2017" name="Plant J.">
        <title>Araport11: a complete reannotation of the Arabidopsis thaliana reference genome.</title>
        <authorList>
            <person name="Cheng C.Y."/>
            <person name="Krishnakumar V."/>
            <person name="Chan A.P."/>
            <person name="Thibaud-Nissen F."/>
            <person name="Schobel S."/>
            <person name="Town C.D."/>
        </authorList>
    </citation>
    <scope>GENOME REANNOTATION</scope>
    <source>
        <strain>cv. Columbia</strain>
    </source>
</reference>
<reference key="3">
    <citation type="submission" date="2003-11" db="EMBL/GenBank/DDBJ databases">
        <title>Arabidopsis cDNA clones.</title>
        <authorList>
            <person name="Shinn P."/>
            <person name="Chen H."/>
            <person name="Cheuk R.F."/>
            <person name="Kim C.J."/>
            <person name="Ecker J.R."/>
        </authorList>
    </citation>
    <scope>NUCLEOTIDE SEQUENCE [MRNA] (ISOFORM 1)</scope>
    <source>
        <strain>cv. Columbia</strain>
    </source>
</reference>
<reference key="4">
    <citation type="submission" date="2004-04" db="EMBL/GenBank/DDBJ databases">
        <title>Arabidopsis ORF clones.</title>
        <authorList>
            <person name="Shinn P."/>
            <person name="Chen H."/>
            <person name="Cheuk R.F."/>
            <person name="Kim C.J."/>
            <person name="Ecker J.R."/>
        </authorList>
    </citation>
    <scope>NUCLEOTIDE SEQUENCE [MRNA] (ISOFORM 1)</scope>
    <source>
        <strain>cv. Columbia</strain>
    </source>
</reference>
<reference key="5">
    <citation type="journal article" date="2002" name="J. Biol. Chem.">
        <title>Functional divergence in the glutathione transferase superfamily in plants. Identification of two classes with putative functions in redox homeostasis in Arabidopsis thaliana.</title>
        <authorList>
            <person name="Dixon D.P."/>
            <person name="Davis B.G."/>
            <person name="Edwards R."/>
        </authorList>
    </citation>
    <scope>FUNCTION</scope>
    <scope>INDUCTION</scope>
</reference>
<reference key="6">
    <citation type="journal article" date="2010" name="J. Biol. Chem.">
        <title>Roles for stress-inducible lambda glutathione transferases in flavonoid metabolism in plants as identified by ligand fishing.</title>
        <authorList>
            <person name="Dixon D.P."/>
            <person name="Edwards R."/>
        </authorList>
    </citation>
    <scope>FUNCTION</scope>
</reference>
<sequence>MALSPPKIFVEDRQVPLDATSDPPALFDGTTRLYISYTCPFAQRVWITRNLKGLQDEIKLVPIDLPNRPAWLKEKVNPANKVPALEHNGKITGESLDLIKYVDSNFDGPSLYPEDSAKREFGEELLKYVDETFVKTVFGSFKGDPVKETASAFDHVENALKKFDDGPFFLGELSLVDIAYIPFIERFQVFLDEVFKYEIIIGRPNLAAWIEQMNKMVAYTQTKTDSEYVVNYFKRFM</sequence>
<proteinExistence type="evidence at transcript level"/>
<accession>Q6NLB0</accession>
<accession>B3H6S5</accession>
<accession>Q9LZ07</accession>
<protein>
    <recommendedName>
        <fullName>Glutathione S-transferase L1</fullName>
        <shortName>AtGSTL1</shortName>
        <ecNumber>2.5.1.18</ecNumber>
    </recommendedName>
    <alternativeName>
        <fullName>GST class-lambda member 1</fullName>
    </alternativeName>
</protein>
<comment type="function">
    <text evidence="2 3">Catalyzes the glutathione-dependent reduction of S-glutathionylquercetin to quercetin. In vitro, possesses glutathione-dependent thiol transferase activity toward 2-hydroxyethyl disulfide (HED).</text>
</comment>
<comment type="catalytic activity">
    <reaction>
        <text>RX + glutathione = an S-substituted glutathione + a halide anion + H(+)</text>
        <dbReference type="Rhea" id="RHEA:16437"/>
        <dbReference type="ChEBI" id="CHEBI:15378"/>
        <dbReference type="ChEBI" id="CHEBI:16042"/>
        <dbReference type="ChEBI" id="CHEBI:17792"/>
        <dbReference type="ChEBI" id="CHEBI:57925"/>
        <dbReference type="ChEBI" id="CHEBI:90779"/>
        <dbReference type="EC" id="2.5.1.18"/>
    </reaction>
</comment>
<comment type="subcellular location">
    <subcellularLocation>
        <location evidence="4">Cytoplasm</location>
        <location evidence="4">Cytosol</location>
    </subcellularLocation>
</comment>
<comment type="alternative products">
    <event type="alternative splicing"/>
    <isoform>
        <id>Q6NLB0-1</id>
        <name>1</name>
        <sequence type="displayed"/>
    </isoform>
    <isoform>
        <id>Q6NLB0-2</id>
        <name>2</name>
        <sequence type="described" ref="VSP_041941"/>
    </isoform>
</comment>
<comment type="induction">
    <text evidence="2">By glutathione, ascorbate and auxin.</text>
</comment>
<comment type="similarity">
    <text evidence="4">Belongs to the GST superfamily. Lambda family.</text>
</comment>
<comment type="sequence caution" evidence="4">
    <conflict type="erroneous gene model prediction">
        <sequence resource="EMBL-CDS" id="CAB86032"/>
    </conflict>
</comment>
<evidence type="ECO:0000250" key="1"/>
<evidence type="ECO:0000269" key="2">
    <source>
    </source>
</evidence>
<evidence type="ECO:0000269" key="3">
    <source>
    </source>
</evidence>
<evidence type="ECO:0000305" key="4"/>
<organism>
    <name type="scientific">Arabidopsis thaliana</name>
    <name type="common">Mouse-ear cress</name>
    <dbReference type="NCBI Taxonomy" id="3702"/>
    <lineage>
        <taxon>Eukaryota</taxon>
        <taxon>Viridiplantae</taxon>
        <taxon>Streptophyta</taxon>
        <taxon>Embryophyta</taxon>
        <taxon>Tracheophyta</taxon>
        <taxon>Spermatophyta</taxon>
        <taxon>Magnoliopsida</taxon>
        <taxon>eudicotyledons</taxon>
        <taxon>Gunneridae</taxon>
        <taxon>Pentapetalae</taxon>
        <taxon>rosids</taxon>
        <taxon>malvids</taxon>
        <taxon>Brassicales</taxon>
        <taxon>Brassicaceae</taxon>
        <taxon>Camelineae</taxon>
        <taxon>Arabidopsis</taxon>
    </lineage>
</organism>
<gene>
    <name type="primary">GSTL1</name>
    <name type="ordered locus">At5g02780</name>
    <name type="ORF">F9G14.90</name>
</gene>
<dbReference type="EC" id="2.5.1.18"/>
<dbReference type="EMBL" id="AL162973">
    <property type="protein sequence ID" value="CAB86032.1"/>
    <property type="status" value="ALT_SEQ"/>
    <property type="molecule type" value="Genomic_DNA"/>
</dbReference>
<dbReference type="EMBL" id="CP002688">
    <property type="protein sequence ID" value="AED90516.1"/>
    <property type="molecule type" value="Genomic_DNA"/>
</dbReference>
<dbReference type="EMBL" id="CP002688">
    <property type="protein sequence ID" value="AED90517.1"/>
    <property type="molecule type" value="Genomic_DNA"/>
</dbReference>
<dbReference type="EMBL" id="CP002688">
    <property type="protein sequence ID" value="ANM70174.1"/>
    <property type="molecule type" value="Genomic_DNA"/>
</dbReference>
<dbReference type="EMBL" id="BT010718">
    <property type="protein sequence ID" value="AAR20775.1"/>
    <property type="molecule type" value="mRNA"/>
</dbReference>
<dbReference type="EMBL" id="BT012424">
    <property type="protein sequence ID" value="AAS92340.1"/>
    <property type="molecule type" value="mRNA"/>
</dbReference>
<dbReference type="PIR" id="T48299">
    <property type="entry name" value="T48299"/>
</dbReference>
<dbReference type="RefSeq" id="NP_001119157.1">
    <molecule id="Q6NLB0-2"/>
    <property type="nucleotide sequence ID" value="NM_001125685.1"/>
</dbReference>
<dbReference type="RefSeq" id="NP_001318461.1">
    <molecule id="Q6NLB0-1"/>
    <property type="nucleotide sequence ID" value="NM_001342670.1"/>
</dbReference>
<dbReference type="RefSeq" id="NP_195898.2">
    <molecule id="Q6NLB0-1"/>
    <property type="nucleotide sequence ID" value="NM_120356.4"/>
</dbReference>
<dbReference type="SMR" id="Q6NLB0"/>
<dbReference type="BioGRID" id="17076">
    <property type="interactions" value="1"/>
</dbReference>
<dbReference type="FunCoup" id="Q6NLB0">
    <property type="interactions" value="373"/>
</dbReference>
<dbReference type="IntAct" id="Q6NLB0">
    <property type="interactions" value="1"/>
</dbReference>
<dbReference type="STRING" id="3702.Q6NLB0"/>
<dbReference type="PaxDb" id="3702-AT5G02780.1"/>
<dbReference type="ProteomicsDB" id="247225">
    <molecule id="Q6NLB0-1"/>
</dbReference>
<dbReference type="EnsemblPlants" id="AT5G02780.1">
    <molecule id="Q6NLB0-1"/>
    <property type="protein sequence ID" value="AT5G02780.1"/>
    <property type="gene ID" value="AT5G02780"/>
</dbReference>
<dbReference type="EnsemblPlants" id="AT5G02780.2">
    <molecule id="Q6NLB0-2"/>
    <property type="protein sequence ID" value="AT5G02780.2"/>
    <property type="gene ID" value="AT5G02780"/>
</dbReference>
<dbReference type="EnsemblPlants" id="AT5G02780.3">
    <molecule id="Q6NLB0-1"/>
    <property type="protein sequence ID" value="AT5G02780.3"/>
    <property type="gene ID" value="AT5G02780"/>
</dbReference>
<dbReference type="GeneID" id="831800"/>
<dbReference type="Gramene" id="AT5G02780.1">
    <molecule id="Q6NLB0-1"/>
    <property type="protein sequence ID" value="AT5G02780.1"/>
    <property type="gene ID" value="AT5G02780"/>
</dbReference>
<dbReference type="Gramene" id="AT5G02780.2">
    <molecule id="Q6NLB0-2"/>
    <property type="protein sequence ID" value="AT5G02780.2"/>
    <property type="gene ID" value="AT5G02780"/>
</dbReference>
<dbReference type="Gramene" id="AT5G02780.3">
    <molecule id="Q6NLB0-1"/>
    <property type="protein sequence ID" value="AT5G02780.3"/>
    <property type="gene ID" value="AT5G02780"/>
</dbReference>
<dbReference type="KEGG" id="ath:AT5G02780"/>
<dbReference type="Araport" id="AT5G02780"/>
<dbReference type="TAIR" id="AT5G02780">
    <property type="gene designation" value="GSTL1"/>
</dbReference>
<dbReference type="eggNOG" id="KOG0406">
    <property type="taxonomic scope" value="Eukaryota"/>
</dbReference>
<dbReference type="InParanoid" id="Q6NLB0"/>
<dbReference type="OMA" id="IRISCNT"/>
<dbReference type="PRO" id="PR:Q6NLB0"/>
<dbReference type="Proteomes" id="UP000006548">
    <property type="component" value="Chromosome 5"/>
</dbReference>
<dbReference type="ExpressionAtlas" id="Q6NLB0">
    <property type="expression patterns" value="baseline and differential"/>
</dbReference>
<dbReference type="GO" id="GO:0005829">
    <property type="term" value="C:cytosol"/>
    <property type="evidence" value="ECO:0007669"/>
    <property type="project" value="UniProtKB-SubCell"/>
</dbReference>
<dbReference type="GO" id="GO:0004364">
    <property type="term" value="F:glutathione transferase activity"/>
    <property type="evidence" value="ECO:0000314"/>
    <property type="project" value="TAIR"/>
</dbReference>
<dbReference type="GO" id="GO:0010731">
    <property type="term" value="P:protein glutathionylation"/>
    <property type="evidence" value="ECO:0000314"/>
    <property type="project" value="TAIR"/>
</dbReference>
<dbReference type="GO" id="GO:0009636">
    <property type="term" value="P:response to toxic substance"/>
    <property type="evidence" value="ECO:0007669"/>
    <property type="project" value="UniProtKB-KW"/>
</dbReference>
<dbReference type="CDD" id="cd03203">
    <property type="entry name" value="GST_C_Lambda"/>
    <property type="match status" value="1"/>
</dbReference>
<dbReference type="FunFam" id="3.40.30.10:FF:000091">
    <property type="entry name" value="Glutathione S-transferase L2, chloroplastic"/>
    <property type="match status" value="1"/>
</dbReference>
<dbReference type="FunFam" id="1.20.1050.10:FF:000041">
    <property type="entry name" value="Lambda class glutathione S-transferase"/>
    <property type="match status" value="1"/>
</dbReference>
<dbReference type="Gene3D" id="1.20.1050.10">
    <property type="match status" value="1"/>
</dbReference>
<dbReference type="Gene3D" id="3.40.30.10">
    <property type="entry name" value="Glutaredoxin"/>
    <property type="match status" value="1"/>
</dbReference>
<dbReference type="InterPro" id="IPR036282">
    <property type="entry name" value="Glutathione-S-Trfase_C_sf"/>
</dbReference>
<dbReference type="InterPro" id="IPR040079">
    <property type="entry name" value="Glutathione_S-Trfase"/>
</dbReference>
<dbReference type="InterPro" id="IPR004045">
    <property type="entry name" value="Glutathione_S-Trfase_N"/>
</dbReference>
<dbReference type="InterPro" id="IPR044629">
    <property type="entry name" value="GSTL1/2/3"/>
</dbReference>
<dbReference type="InterPro" id="IPR036249">
    <property type="entry name" value="Thioredoxin-like_sf"/>
</dbReference>
<dbReference type="PANTHER" id="PTHR44328">
    <property type="entry name" value="GLUTATHIONE S-TRANSFERASE L1"/>
    <property type="match status" value="1"/>
</dbReference>
<dbReference type="PANTHER" id="PTHR44328:SF6">
    <property type="entry name" value="GLUTATHIONE S-TRANSFERASE L1-RELATED"/>
    <property type="match status" value="1"/>
</dbReference>
<dbReference type="Pfam" id="PF13410">
    <property type="entry name" value="GST_C_2"/>
    <property type="match status" value="1"/>
</dbReference>
<dbReference type="Pfam" id="PF13417">
    <property type="entry name" value="GST_N_3"/>
    <property type="match status" value="1"/>
</dbReference>
<dbReference type="SFLD" id="SFLDS00019">
    <property type="entry name" value="Glutathione_Transferase_(cytos"/>
    <property type="match status" value="1"/>
</dbReference>
<dbReference type="SFLD" id="SFLDG00358">
    <property type="entry name" value="Main_(cytGST)"/>
    <property type="match status" value="1"/>
</dbReference>
<dbReference type="SUPFAM" id="SSF47616">
    <property type="entry name" value="GST C-terminal domain-like"/>
    <property type="match status" value="1"/>
</dbReference>
<dbReference type="SUPFAM" id="SSF52833">
    <property type="entry name" value="Thioredoxin-like"/>
    <property type="match status" value="1"/>
</dbReference>
<dbReference type="PROSITE" id="PS50405">
    <property type="entry name" value="GST_CTER"/>
    <property type="match status" value="1"/>
</dbReference>
<dbReference type="PROSITE" id="PS50404">
    <property type="entry name" value="GST_NTER"/>
    <property type="match status" value="1"/>
</dbReference>